<organism>
    <name type="scientific">Vaccinia virus (strain Western Reserve)</name>
    <name type="common">VACV</name>
    <name type="synonym">Vaccinia virus (strain WR)</name>
    <dbReference type="NCBI Taxonomy" id="10254"/>
    <lineage>
        <taxon>Viruses</taxon>
        <taxon>Varidnaviria</taxon>
        <taxon>Bamfordvirae</taxon>
        <taxon>Nucleocytoviricota</taxon>
        <taxon>Pokkesviricetes</taxon>
        <taxon>Chitovirales</taxon>
        <taxon>Poxviridae</taxon>
        <taxon>Chordopoxvirinae</taxon>
        <taxon>Orthopoxvirus</taxon>
        <taxon>Vaccinia virus</taxon>
    </lineage>
</organism>
<keyword id="KW-0067">ATP-binding</keyword>
<keyword id="KW-0244">Early protein</keyword>
<keyword id="KW-1048">Host nucleus</keyword>
<keyword id="KW-0547">Nucleotide-binding</keyword>
<keyword id="KW-1185">Reference proteome</keyword>
<sequence length="283" mass="33310">MESFKYCFDNDGKKWIIGNTLYSGNSILYKVRKNFTSSFYNYVMKIDHKSHKPLLSEIRFYISVLDPLTIDNWTRERGIKYLAIPDLYGIGETDDYMFFVIKNLGRVFAPKDTESVFEACVTMINTLEFIHSQGFTHGKIEPRNILIRNKRLSLIDYSRTNKLYKSGNSHIDYNEDMITSGNINYMCVDNHLGATVSRRGDLEMLGYCMIEWFGGKLPWKNESSIKVIKQKKEYKKFIATFFEDCFPEGNEPLELVRYIELVYTLDYSQTPNYDRLRKLFIQD</sequence>
<comment type="function">
    <text evidence="3 4 5">Pseudokinase that plays a role in viral DNA replication repression by activating the antiviral protein BANF1 and inhibiting the activity of host VRK1, a cellular modulator of BANF1.</text>
</comment>
<comment type="activity regulation">
    <text evidence="3">Both catalytically active kinases B1/VPK1 and host VRK2 repress B12 inhibitory activity in a B1/VPK1 deletion mutant strain.</text>
</comment>
<comment type="subunit">
    <text evidence="4 5">Interacts with B1/VPK1 (PubMed:31341052). Interacts with host VRK1 (PubMed:33177193). Interacts with host VRK2 (PubMed:31341052, PubMed:33177193).</text>
</comment>
<comment type="subcellular location">
    <subcellularLocation>
        <location evidence="3">Host nucleus</location>
    </subcellularLocation>
</comment>
<comment type="induction">
    <text evidence="2 6">Expressed in the early phase of the viral replicative cycle.</text>
</comment>
<comment type="disruption phenotype">
    <text evidence="3">Deletion mutants exhibit rescued DNA replication and viral yield in multiple cell lines when B1 kinase/VPK1 is deleted.</text>
</comment>
<comment type="similarity">
    <text evidence="1">Belongs to the protein kinase superfamily. Ser/Thr protein kinase family. Poxviruses subfamily.</text>
</comment>
<proteinExistence type="evidence at protein level"/>
<gene>
    <name type="primary">OPG198</name>
    <name type="ordered locus">VACWR194</name>
    <name type="ORF">B12R</name>
</gene>
<accession>P24362</accession>
<accession>Q76ZL1</accession>
<reference key="1">
    <citation type="journal article" date="1991" name="J. Gen. Virol.">
        <title>Nucleotide sequence of 42 kbp of vaccinia virus strain WR from near the right inverted terminal repeat.</title>
        <authorList>
            <person name="Smith G.L."/>
            <person name="Chan Y.S."/>
            <person name="Howard S.T."/>
        </authorList>
    </citation>
    <scope>NUCLEOTIDE SEQUENCE [GENOMIC DNA]</scope>
    <scope>INDUCTION</scope>
</reference>
<reference key="2">
    <citation type="journal article" date="1989" name="J. Gen. Virol.">
        <title>Two early vaccinia virus genes encode polypeptides related to protein kinases.</title>
        <authorList>
            <person name="Howard S.T."/>
            <person name="Smith G.L."/>
        </authorList>
    </citation>
    <scope>NUCLEOTIDE SEQUENCE [GENOMIC DNA]</scope>
</reference>
<reference key="3">
    <citation type="submission" date="2003-02" db="EMBL/GenBank/DDBJ databases">
        <title>Sequencing of the coding region of Vaccinia-WR to an average 9-fold redundancy and an error rate of 0.16/10kb.</title>
        <authorList>
            <person name="Esposito J.J."/>
            <person name="Frace A.M."/>
            <person name="Sammons S.A."/>
            <person name="Olsen-Rasmussen M."/>
            <person name="Osborne J."/>
            <person name="Wohlhueter R."/>
        </authorList>
    </citation>
    <scope>NUCLEOTIDE SEQUENCE [LARGE SCALE GENOMIC DNA]</scope>
</reference>
<reference key="4">
    <citation type="journal article" date="1993" name="J. Gen. Virol.">
        <title>Characterization of vaccinia virus gene B12R.</title>
        <authorList>
            <person name="Banham A.H."/>
            <person name="Smith G.L."/>
        </authorList>
    </citation>
    <scope>INDUCTION</scope>
    <scope>LACK OF ACTIVITY</scope>
</reference>
<reference key="5">
    <citation type="journal article" date="2019" name="PLoS Pathog.">
        <title>A poxvirus pseudokinase represses viral DNA replication via a pathway antagonized by its paralog kinase.</title>
        <authorList>
            <person name="Olson A.T."/>
            <person name="Wang Z."/>
            <person name="Rico A.B."/>
            <person name="Wiebe M.S."/>
        </authorList>
    </citation>
    <scope>FUNCTION</scope>
    <scope>SUBCELLULAR LOCATION</scope>
    <scope>DISRUPTION PHENOTYPE</scope>
</reference>
<reference key="6">
    <citation type="journal article" date="2019" name="J. Virol.">
        <title>The Vaccinia Virus (VACV) B1 and Cellular VRK2 Kinases Promote VACV Replication Factory Formation through Phosphorylation-Dependent Inhibition of VACV B12.</title>
        <authorList>
            <person name="Rico A.B."/>
            <person name="Wang Z."/>
            <person name="Olson A.T."/>
            <person name="Linville A.C."/>
            <person name="Bullard B.L."/>
            <person name="Weaver E.A."/>
            <person name="Jones C."/>
            <person name="Wiebe M.S."/>
        </authorList>
    </citation>
    <scope>FUNCTION</scope>
    <scope>INTERACTION WITH B1/VPK1 AND HOST VRK2</scope>
</reference>
<reference key="7">
    <citation type="journal article" date="2021" name="J. Virol.">
        <title>The Vaccinia Virus B12 Pseudokinase Represses Viral Replication via Interaction with the Cellular Kinase VRK1 and Activation of the Antiviral Effector BAF.</title>
        <authorList>
            <person name="Rico A.B."/>
            <person name="Linville A.C."/>
            <person name="Olson A.T."/>
            <person name="Wang Z."/>
            <person name="Wiebe M.S."/>
        </authorList>
    </citation>
    <scope>FUNCTION</scope>
    <scope>INTERACTION WITH HOST VRK1 AND VRK2</scope>
</reference>
<protein>
    <recommendedName>
        <fullName>Pseudokinase OPG198</fullName>
    </recommendedName>
</protein>
<feature type="chain" id="PRO_0000086197" description="Pseudokinase OPG198">
    <location>
        <begin position="1"/>
        <end position="283"/>
    </location>
</feature>
<feature type="domain" description="Protein kinase" evidence="1">
    <location>
        <begin position="1"/>
        <end position="283"/>
    </location>
</feature>
<feature type="binding site" evidence="1">
    <location>
        <position position="1"/>
    </location>
    <ligand>
        <name>ATP</name>
        <dbReference type="ChEBI" id="CHEBI:30616"/>
    </ligand>
</feature>
<feature type="binding site" evidence="1">
    <location>
        <position position="30"/>
    </location>
    <ligand>
        <name>ATP</name>
        <dbReference type="ChEBI" id="CHEBI:30616"/>
    </ligand>
</feature>
<name>KRB2_VACCW</name>
<evidence type="ECO:0000255" key="1">
    <source>
        <dbReference type="PROSITE-ProRule" id="PRU00159"/>
    </source>
</evidence>
<evidence type="ECO:0000269" key="2">
    <source>
    </source>
</evidence>
<evidence type="ECO:0000269" key="3">
    <source>
    </source>
</evidence>
<evidence type="ECO:0000269" key="4">
    <source>
    </source>
</evidence>
<evidence type="ECO:0000269" key="5">
    <source>
    </source>
</evidence>
<evidence type="ECO:0000269" key="6">
    <source>
    </source>
</evidence>
<organismHost>
    <name type="scientific">Bos taurus</name>
    <name type="common">Bovine</name>
    <dbReference type="NCBI Taxonomy" id="9913"/>
</organismHost>
<dbReference type="EMBL" id="D11079">
    <property type="protein sequence ID" value="BAA01842.1"/>
    <property type="molecule type" value="Genomic_DNA"/>
</dbReference>
<dbReference type="EMBL" id="D00629">
    <property type="protein sequence ID" value="BAA00520.1"/>
    <property type="molecule type" value="Genomic_DNA"/>
</dbReference>
<dbReference type="EMBL" id="AY243312">
    <property type="protein sequence ID" value="AAO89473.1"/>
    <property type="molecule type" value="Genomic_DNA"/>
</dbReference>
<dbReference type="PIR" id="A33610">
    <property type="entry name" value="TVVZBW"/>
</dbReference>
<dbReference type="RefSeq" id="YP_233076.1">
    <property type="nucleotide sequence ID" value="NC_006998.1"/>
</dbReference>
<dbReference type="SMR" id="P24362"/>
<dbReference type="DNASU" id="3707665"/>
<dbReference type="GeneID" id="3707665"/>
<dbReference type="KEGG" id="vg:3707665"/>
<dbReference type="Proteomes" id="UP000000344">
    <property type="component" value="Genome"/>
</dbReference>
<dbReference type="GO" id="GO:0042025">
    <property type="term" value="C:host cell nucleus"/>
    <property type="evidence" value="ECO:0007669"/>
    <property type="project" value="UniProtKB-SubCell"/>
</dbReference>
<dbReference type="GO" id="GO:0005524">
    <property type="term" value="F:ATP binding"/>
    <property type="evidence" value="ECO:0007669"/>
    <property type="project" value="UniProtKB-KW"/>
</dbReference>
<dbReference type="GO" id="GO:0004674">
    <property type="term" value="F:protein serine/threonine kinase activity"/>
    <property type="evidence" value="ECO:0007669"/>
    <property type="project" value="UniProtKB-EC"/>
</dbReference>
<dbReference type="Gene3D" id="1.10.510.10">
    <property type="entry name" value="Transferase(Phosphotransferase) domain 1"/>
    <property type="match status" value="1"/>
</dbReference>
<dbReference type="InterPro" id="IPR050235">
    <property type="entry name" value="CK1_Ser-Thr_kinase"/>
</dbReference>
<dbReference type="InterPro" id="IPR011009">
    <property type="entry name" value="Kinase-like_dom_sf"/>
</dbReference>
<dbReference type="InterPro" id="IPR000719">
    <property type="entry name" value="Prot_kinase_dom"/>
</dbReference>
<dbReference type="InterPro" id="IPR001245">
    <property type="entry name" value="Ser-Thr/Tyr_kinase_cat_dom"/>
</dbReference>
<dbReference type="PANTHER" id="PTHR11909">
    <property type="entry name" value="CASEIN KINASE-RELATED"/>
    <property type="match status" value="1"/>
</dbReference>
<dbReference type="Pfam" id="PF07714">
    <property type="entry name" value="PK_Tyr_Ser-Thr"/>
    <property type="match status" value="1"/>
</dbReference>
<dbReference type="SUPFAM" id="SSF56112">
    <property type="entry name" value="Protein kinase-like (PK-like)"/>
    <property type="match status" value="1"/>
</dbReference>
<dbReference type="PROSITE" id="PS50011">
    <property type="entry name" value="PROTEIN_KINASE_DOM"/>
    <property type="match status" value="1"/>
</dbReference>